<gene>
    <name type="ordered locus">CPn_0593</name>
    <name type="ordered locus">CP_0155</name>
    <name type="ordered locus">CPj0593</name>
    <name type="ordered locus">CpB0616</name>
</gene>
<name>Y593_CHLPN</name>
<protein>
    <recommendedName>
        <fullName>Uncharacterized protein CPn_0593/CP_0155/CPj0593/CpB0616</fullName>
    </recommendedName>
</protein>
<organism>
    <name type="scientific">Chlamydia pneumoniae</name>
    <name type="common">Chlamydophila pneumoniae</name>
    <dbReference type="NCBI Taxonomy" id="83558"/>
    <lineage>
        <taxon>Bacteria</taxon>
        <taxon>Pseudomonadati</taxon>
        <taxon>Chlamydiota</taxon>
        <taxon>Chlamydiia</taxon>
        <taxon>Chlamydiales</taxon>
        <taxon>Chlamydiaceae</taxon>
        <taxon>Chlamydia/Chlamydophila group</taxon>
        <taxon>Chlamydia</taxon>
    </lineage>
</organism>
<evidence type="ECO:0000255" key="1"/>
<evidence type="ECO:0000255" key="2">
    <source>
        <dbReference type="PROSITE-ProRule" id="PRU01118"/>
    </source>
</evidence>
<evidence type="ECO:0000305" key="3"/>
<keyword id="KW-0472">Membrane</keyword>
<keyword id="KW-0812">Transmembrane</keyword>
<keyword id="KW-1133">Transmembrane helix</keyword>
<sequence>MAFKRKTRWLWQVLILSVGLNMLFLLLFYSAIFRKDIYKLHLFSGPLIAKSSRKVYLSEDFLNEISQASLDDLISLFKDERYMYGRPIKLWALSVAIASHHIDITPVLSKPLTYTELKGSSVRWLLPNIDLKDFPVILDYLRCHKYPYTSKGLFLLIEKMVQEGWVDEDCLYHFCSTPEFLYLRTLLVGADVQASSVASLARMVIRCGSERFFHFCNEESRTSMISATQRQKVLKSYLDCEESLAALLLLVHDSDVVLHEFCDEDLEKVIRLMPQESPYSQNFFSRLQHSPRRELACMSTQRVEAPRVQEDQDEEYVVQDGDSLWLIAKRFGIPMDKIIQKNGLNHHRLFPGKVLKLPAKQS</sequence>
<dbReference type="EMBL" id="AE001363">
    <property type="protein sequence ID" value="AAD18732.1"/>
    <property type="molecule type" value="Genomic_DNA"/>
</dbReference>
<dbReference type="EMBL" id="AE002161">
    <property type="protein sequence ID" value="AAF38036.1"/>
    <property type="molecule type" value="Genomic_DNA"/>
</dbReference>
<dbReference type="EMBL" id="BA000008">
    <property type="protein sequence ID" value="BAA98800.1"/>
    <property type="molecule type" value="Genomic_DNA"/>
</dbReference>
<dbReference type="EMBL" id="AE009440">
    <property type="protein sequence ID" value="AAP98546.1"/>
    <property type="molecule type" value="Genomic_DNA"/>
</dbReference>
<dbReference type="PIR" id="A72061">
    <property type="entry name" value="A72061"/>
</dbReference>
<dbReference type="PIR" id="D81606">
    <property type="entry name" value="D81606"/>
</dbReference>
<dbReference type="PIR" id="F86564">
    <property type="entry name" value="F86564"/>
</dbReference>
<dbReference type="RefSeq" id="NP_224789.1">
    <property type="nucleotide sequence ID" value="NC_000922.1"/>
</dbReference>
<dbReference type="RefSeq" id="WP_010883231.1">
    <property type="nucleotide sequence ID" value="NZ_LN847257.1"/>
</dbReference>
<dbReference type="RefSeq" id="WP_010895343.1">
    <property type="nucleotide sequence ID" value="NZ_LN846995.1"/>
</dbReference>
<dbReference type="SMR" id="Q9Z7W1"/>
<dbReference type="STRING" id="406984.CPK_ORF01109"/>
<dbReference type="GeneID" id="45050640"/>
<dbReference type="KEGG" id="cpa:CP_0155"/>
<dbReference type="KEGG" id="cpj:CPj0593"/>
<dbReference type="KEGG" id="cpn:CPn_0593"/>
<dbReference type="KEGG" id="cpt:CpB0616"/>
<dbReference type="PATRIC" id="fig|115713.3.peg.661"/>
<dbReference type="eggNOG" id="COG1388">
    <property type="taxonomic scope" value="Bacteria"/>
</dbReference>
<dbReference type="HOGENOM" id="CLU_766615_0_0_0"/>
<dbReference type="OrthoDB" id="17478at2"/>
<dbReference type="Proteomes" id="UP000000583">
    <property type="component" value="Chromosome"/>
</dbReference>
<dbReference type="Proteomes" id="UP000000801">
    <property type="component" value="Chromosome"/>
</dbReference>
<dbReference type="GO" id="GO:0016020">
    <property type="term" value="C:membrane"/>
    <property type="evidence" value="ECO:0007669"/>
    <property type="project" value="UniProtKB-SubCell"/>
</dbReference>
<dbReference type="CDD" id="cd00118">
    <property type="entry name" value="LysM"/>
    <property type="match status" value="1"/>
</dbReference>
<dbReference type="Gene3D" id="3.10.350.10">
    <property type="entry name" value="LysM domain"/>
    <property type="match status" value="1"/>
</dbReference>
<dbReference type="InterPro" id="IPR018392">
    <property type="entry name" value="LysM_dom"/>
</dbReference>
<dbReference type="InterPro" id="IPR036779">
    <property type="entry name" value="LysM_dom_sf"/>
</dbReference>
<dbReference type="Pfam" id="PF01476">
    <property type="entry name" value="LysM"/>
    <property type="match status" value="1"/>
</dbReference>
<dbReference type="SMART" id="SM00257">
    <property type="entry name" value="LysM"/>
    <property type="match status" value="1"/>
</dbReference>
<dbReference type="SUPFAM" id="SSF54106">
    <property type="entry name" value="LysM domain"/>
    <property type="match status" value="1"/>
</dbReference>
<dbReference type="PROSITE" id="PS51782">
    <property type="entry name" value="LYSM"/>
    <property type="match status" value="1"/>
</dbReference>
<accession>Q9Z7W1</accession>
<accession>Q9JSD4</accession>
<accession>Q9K2D3</accession>
<reference key="1">
    <citation type="journal article" date="1999" name="Nat. Genet.">
        <title>Comparative genomes of Chlamydia pneumoniae and C. trachomatis.</title>
        <authorList>
            <person name="Kalman S."/>
            <person name="Mitchell W.P."/>
            <person name="Marathe R."/>
            <person name="Lammel C.J."/>
            <person name="Fan J."/>
            <person name="Hyman R.W."/>
            <person name="Olinger L."/>
            <person name="Grimwood J."/>
            <person name="Davis R.W."/>
            <person name="Stephens R.S."/>
        </authorList>
    </citation>
    <scope>NUCLEOTIDE SEQUENCE [LARGE SCALE GENOMIC DNA]</scope>
    <source>
        <strain>CWL029</strain>
    </source>
</reference>
<reference key="2">
    <citation type="journal article" date="2000" name="Nucleic Acids Res.">
        <title>Genome sequences of Chlamydia trachomatis MoPn and Chlamydia pneumoniae AR39.</title>
        <authorList>
            <person name="Read T.D."/>
            <person name="Brunham R.C."/>
            <person name="Shen C."/>
            <person name="Gill S.R."/>
            <person name="Heidelberg J.F."/>
            <person name="White O."/>
            <person name="Hickey E.K."/>
            <person name="Peterson J.D."/>
            <person name="Utterback T.R."/>
            <person name="Berry K.J."/>
            <person name="Bass S."/>
            <person name="Linher K.D."/>
            <person name="Weidman J.F."/>
            <person name="Khouri H.M."/>
            <person name="Craven B."/>
            <person name="Bowman C."/>
            <person name="Dodson R.J."/>
            <person name="Gwinn M.L."/>
            <person name="Nelson W.C."/>
            <person name="DeBoy R.T."/>
            <person name="Kolonay J.F."/>
            <person name="McClarty G."/>
            <person name="Salzberg S.L."/>
            <person name="Eisen J.A."/>
            <person name="Fraser C.M."/>
        </authorList>
    </citation>
    <scope>NUCLEOTIDE SEQUENCE [LARGE SCALE GENOMIC DNA]</scope>
    <source>
        <strain>AR39</strain>
    </source>
</reference>
<reference key="3">
    <citation type="journal article" date="2000" name="Nucleic Acids Res.">
        <title>Comparison of whole genome sequences of Chlamydia pneumoniae J138 from Japan and CWL029 from USA.</title>
        <authorList>
            <person name="Shirai M."/>
            <person name="Hirakawa H."/>
            <person name="Kimoto M."/>
            <person name="Tabuchi M."/>
            <person name="Kishi F."/>
            <person name="Ouchi K."/>
            <person name="Shiba T."/>
            <person name="Ishii K."/>
            <person name="Hattori M."/>
            <person name="Kuhara S."/>
            <person name="Nakazawa T."/>
        </authorList>
    </citation>
    <scope>NUCLEOTIDE SEQUENCE [LARGE SCALE GENOMIC DNA]</scope>
    <source>
        <strain>J138</strain>
    </source>
</reference>
<reference key="4">
    <citation type="submission" date="2002-05" db="EMBL/GenBank/DDBJ databases">
        <title>The genome sequence of Chlamydia pneumoniae TW183 and comparison with other Chlamydia strains based on whole genome sequence analysis.</title>
        <authorList>
            <person name="Geng M.M."/>
            <person name="Schuhmacher A."/>
            <person name="Muehldorfer I."/>
            <person name="Bensch K.W."/>
            <person name="Schaefer K.P."/>
            <person name="Schneider S."/>
            <person name="Pohl T."/>
            <person name="Essig A."/>
            <person name="Marre R."/>
            <person name="Melchers K."/>
        </authorList>
    </citation>
    <scope>NUCLEOTIDE SEQUENCE [LARGE SCALE GENOMIC DNA]</scope>
    <source>
        <strain>TW-183</strain>
    </source>
</reference>
<feature type="chain" id="PRO_0000218401" description="Uncharacterized protein CPn_0593/CP_0155/CPj0593/CpB0616">
    <location>
        <begin position="1"/>
        <end position="362"/>
    </location>
</feature>
<feature type="transmembrane region" description="Helical" evidence="1">
    <location>
        <begin position="13"/>
        <end position="33"/>
    </location>
</feature>
<feature type="domain" description="LysM" evidence="2">
    <location>
        <begin position="314"/>
        <end position="357"/>
    </location>
</feature>
<feature type="sequence conflict" description="In Ref. 3; BAA98800." evidence="3" ref="3">
    <original>Q</original>
    <variation>R</variation>
    <location>
        <position position="301"/>
    </location>
</feature>
<comment type="subcellular location">
    <subcellularLocation>
        <location evidence="3">Membrane</location>
        <topology evidence="3">Single-pass membrane protein</topology>
    </subcellularLocation>
</comment>
<comment type="similarity">
    <text evidence="3">Belongs to the chlamydial CPn_0593/CT_474/TC_0759 family.</text>
</comment>
<proteinExistence type="inferred from homology"/>